<sequence>MPGSAGWRKVFGGTGGATGALPRHGRGSIVYARSTTIEAQPLSVDIGIAHVRDVVMPALQEIDGCVGVSLLVDRQSGRCIATSAWETLEAMRASVERVAPIRDRAALMFAGSARVEEWDIALLHRDHPSHEGACVRATWLKVVPDQLGRSLEFYRTSVLPELESLDGFCSASLMVDHPACRRAVSCSTFDSMDAMARNRDRASELRSRRVRELGAEVLDVAEFELAIAHLRVPELV</sequence>
<protein>
    <recommendedName>
        <fullName>Uncharacterized protein MT2635</fullName>
    </recommendedName>
</protein>
<keyword id="KW-1185">Reference proteome</keyword>
<dbReference type="EMBL" id="AE000516">
    <property type="protein sequence ID" value="AAK46947.1"/>
    <property type="molecule type" value="Genomic_DNA"/>
</dbReference>
<dbReference type="PIR" id="B70728">
    <property type="entry name" value="B70728"/>
</dbReference>
<dbReference type="SMR" id="P9WLA2"/>
<dbReference type="KEGG" id="mtc:MT2635"/>
<dbReference type="PATRIC" id="fig|83331.31.peg.2841"/>
<dbReference type="HOGENOM" id="CLU_088918_0_0_11"/>
<dbReference type="Proteomes" id="UP000001020">
    <property type="component" value="Chromosome"/>
</dbReference>
<dbReference type="InterPro" id="IPR011008">
    <property type="entry name" value="Dimeric_a/b-barrel"/>
</dbReference>
<dbReference type="SUPFAM" id="SSF54909">
    <property type="entry name" value="Dimeric alpha+beta barrel"/>
    <property type="match status" value="1"/>
</dbReference>
<gene>
    <name type="ordered locus">MT2635</name>
</gene>
<accession>P9WLA2</accession>
<accession>L0TBK3</accession>
<accession>P65005</accession>
<accession>Q50740</accession>
<evidence type="ECO:0000305" key="1"/>
<proteinExistence type="predicted"/>
<reference key="1">
    <citation type="journal article" date="2002" name="J. Bacteriol.">
        <title>Whole-genome comparison of Mycobacterium tuberculosis clinical and laboratory strains.</title>
        <authorList>
            <person name="Fleischmann R.D."/>
            <person name="Alland D."/>
            <person name="Eisen J.A."/>
            <person name="Carpenter L."/>
            <person name="White O."/>
            <person name="Peterson J.D."/>
            <person name="DeBoy R.T."/>
            <person name="Dodson R.J."/>
            <person name="Gwinn M.L."/>
            <person name="Haft D.H."/>
            <person name="Hickey E.K."/>
            <person name="Kolonay J.F."/>
            <person name="Nelson W.C."/>
            <person name="Umayam L.A."/>
            <person name="Ermolaeva M.D."/>
            <person name="Salzberg S.L."/>
            <person name="Delcher A."/>
            <person name="Utterback T.R."/>
            <person name="Weidman J.F."/>
            <person name="Khouri H.M."/>
            <person name="Gill J."/>
            <person name="Mikula A."/>
            <person name="Bishai W."/>
            <person name="Jacobs W.R. Jr."/>
            <person name="Venter J.C."/>
            <person name="Fraser C.M."/>
        </authorList>
    </citation>
    <scope>NUCLEOTIDE SEQUENCE [LARGE SCALE GENOMIC DNA]</scope>
    <source>
        <strain>CDC 1551 / Oshkosh</strain>
    </source>
</reference>
<feature type="chain" id="PRO_0000427514" description="Uncharacterized protein MT2635">
    <location>
        <begin position="1"/>
        <end position="236"/>
    </location>
</feature>
<organism>
    <name type="scientific">Mycobacterium tuberculosis (strain CDC 1551 / Oshkosh)</name>
    <dbReference type="NCBI Taxonomy" id="83331"/>
    <lineage>
        <taxon>Bacteria</taxon>
        <taxon>Bacillati</taxon>
        <taxon>Actinomycetota</taxon>
        <taxon>Actinomycetes</taxon>
        <taxon>Mycobacteriales</taxon>
        <taxon>Mycobacteriaceae</taxon>
        <taxon>Mycobacterium</taxon>
        <taxon>Mycobacterium tuberculosis complex</taxon>
    </lineage>
</organism>
<comment type="similarity">
    <text evidence="1">To M.tuberculosis Rv2557.</text>
</comment>
<name>Y2558_MYCTO</name>